<proteinExistence type="inferred from homology"/>
<keyword id="KW-0067">ATP-binding</keyword>
<keyword id="KW-0963">Cytoplasm</keyword>
<keyword id="KW-0460">Magnesium</keyword>
<keyword id="KW-0479">Metal-binding</keyword>
<keyword id="KW-0547">Nucleotide-binding</keyword>
<keyword id="KW-0554">One-carbon metabolism</keyword>
<keyword id="KW-0630">Potassium</keyword>
<keyword id="KW-0808">Transferase</keyword>
<accession>Q3K5E8</accession>
<gene>
    <name evidence="1" type="primary">metK</name>
    <name type="ordered locus">Pfl01_5269</name>
</gene>
<feature type="chain" id="PRO_0000241019" description="S-adenosylmethionine synthase">
    <location>
        <begin position="1"/>
        <end position="396"/>
    </location>
</feature>
<feature type="region of interest" description="Flexible loop" evidence="1">
    <location>
        <begin position="100"/>
        <end position="110"/>
    </location>
</feature>
<feature type="binding site" description="in other chain" evidence="1">
    <location>
        <position position="16"/>
    </location>
    <ligand>
        <name>ATP</name>
        <dbReference type="ChEBI" id="CHEBI:30616"/>
        <note>ligand shared between two neighboring subunits</note>
    </ligand>
</feature>
<feature type="binding site" evidence="1">
    <location>
        <position position="18"/>
    </location>
    <ligand>
        <name>Mg(2+)</name>
        <dbReference type="ChEBI" id="CHEBI:18420"/>
    </ligand>
</feature>
<feature type="binding site" evidence="1">
    <location>
        <position position="44"/>
    </location>
    <ligand>
        <name>K(+)</name>
        <dbReference type="ChEBI" id="CHEBI:29103"/>
    </ligand>
</feature>
<feature type="binding site" description="in other chain" evidence="1">
    <location>
        <position position="57"/>
    </location>
    <ligand>
        <name>L-methionine</name>
        <dbReference type="ChEBI" id="CHEBI:57844"/>
        <note>ligand shared between two neighboring subunits</note>
    </ligand>
</feature>
<feature type="binding site" description="in other chain" evidence="1">
    <location>
        <position position="100"/>
    </location>
    <ligand>
        <name>L-methionine</name>
        <dbReference type="ChEBI" id="CHEBI:57844"/>
        <note>ligand shared between two neighboring subunits</note>
    </ligand>
</feature>
<feature type="binding site" description="in other chain" evidence="1">
    <location>
        <begin position="165"/>
        <end position="167"/>
    </location>
    <ligand>
        <name>ATP</name>
        <dbReference type="ChEBI" id="CHEBI:30616"/>
        <note>ligand shared between two neighboring subunits</note>
    </ligand>
</feature>
<feature type="binding site" evidence="1">
    <location>
        <position position="240"/>
    </location>
    <ligand>
        <name>ATP</name>
        <dbReference type="ChEBI" id="CHEBI:30616"/>
        <note>ligand shared between two neighboring subunits</note>
    </ligand>
</feature>
<feature type="binding site" evidence="1">
    <location>
        <position position="240"/>
    </location>
    <ligand>
        <name>L-methionine</name>
        <dbReference type="ChEBI" id="CHEBI:57844"/>
        <note>ligand shared between two neighboring subunits</note>
    </ligand>
</feature>
<feature type="binding site" description="in other chain" evidence="1">
    <location>
        <begin position="246"/>
        <end position="247"/>
    </location>
    <ligand>
        <name>ATP</name>
        <dbReference type="ChEBI" id="CHEBI:30616"/>
        <note>ligand shared between two neighboring subunits</note>
    </ligand>
</feature>
<feature type="binding site" evidence="1">
    <location>
        <position position="263"/>
    </location>
    <ligand>
        <name>ATP</name>
        <dbReference type="ChEBI" id="CHEBI:30616"/>
        <note>ligand shared between two neighboring subunits</note>
    </ligand>
</feature>
<feature type="binding site" evidence="1">
    <location>
        <position position="267"/>
    </location>
    <ligand>
        <name>ATP</name>
        <dbReference type="ChEBI" id="CHEBI:30616"/>
        <note>ligand shared between two neighboring subunits</note>
    </ligand>
</feature>
<feature type="binding site" description="in other chain" evidence="1">
    <location>
        <position position="271"/>
    </location>
    <ligand>
        <name>L-methionine</name>
        <dbReference type="ChEBI" id="CHEBI:57844"/>
        <note>ligand shared between two neighboring subunits</note>
    </ligand>
</feature>
<name>METK_PSEPF</name>
<sequence>MSEYSLFTSESVSEGHPDKIADQISDAVLDAIIAQDKHARVAVETLVKTGVAIVAGEVTTSAWVDLEQIVRDVICDIGYTSSDVGFDGATCGVMNIIGKQSPDINQGVDRAKPEDQGAGDQGLMFGYASNETDVLMPAPITFSHQLVQRQAEARKSGLLPWLRPDAKSQVTCRYEGGKVVGIDAVVLSTQHNPEVSYNDLREGVMELIVKHVLPAELLSKDTQFHINPTGQFIIGGPVGDCGLTGRKIIVDSYGGMARHGGGAFSGKDPSKVDRSAAYAGRYVAKNIVAAGLAERCEIQVSYAIGVAQPTSISLNTFGTGKISDDKIIKLVREVFDLRPYAITTMLDLLHPMYQETAAYGHFGRAPQTKTVGEDTFSTFTWEKTDRADALRSAAGL</sequence>
<dbReference type="EC" id="2.5.1.6" evidence="1"/>
<dbReference type="EMBL" id="CP000094">
    <property type="protein sequence ID" value="ABA77006.1"/>
    <property type="molecule type" value="Genomic_DNA"/>
</dbReference>
<dbReference type="RefSeq" id="WP_011336330.1">
    <property type="nucleotide sequence ID" value="NC_007492.2"/>
</dbReference>
<dbReference type="SMR" id="Q3K5E8"/>
<dbReference type="KEGG" id="pfo:Pfl01_5269"/>
<dbReference type="eggNOG" id="COG0192">
    <property type="taxonomic scope" value="Bacteria"/>
</dbReference>
<dbReference type="HOGENOM" id="CLU_041802_1_1_6"/>
<dbReference type="UniPathway" id="UPA00315">
    <property type="reaction ID" value="UER00080"/>
</dbReference>
<dbReference type="Proteomes" id="UP000002704">
    <property type="component" value="Chromosome"/>
</dbReference>
<dbReference type="GO" id="GO:0005737">
    <property type="term" value="C:cytoplasm"/>
    <property type="evidence" value="ECO:0007669"/>
    <property type="project" value="UniProtKB-SubCell"/>
</dbReference>
<dbReference type="GO" id="GO:0005524">
    <property type="term" value="F:ATP binding"/>
    <property type="evidence" value="ECO:0007669"/>
    <property type="project" value="UniProtKB-UniRule"/>
</dbReference>
<dbReference type="GO" id="GO:0000287">
    <property type="term" value="F:magnesium ion binding"/>
    <property type="evidence" value="ECO:0007669"/>
    <property type="project" value="UniProtKB-UniRule"/>
</dbReference>
<dbReference type="GO" id="GO:0004478">
    <property type="term" value="F:methionine adenosyltransferase activity"/>
    <property type="evidence" value="ECO:0007669"/>
    <property type="project" value="UniProtKB-UniRule"/>
</dbReference>
<dbReference type="GO" id="GO:0006730">
    <property type="term" value="P:one-carbon metabolic process"/>
    <property type="evidence" value="ECO:0007669"/>
    <property type="project" value="UniProtKB-KW"/>
</dbReference>
<dbReference type="GO" id="GO:0006556">
    <property type="term" value="P:S-adenosylmethionine biosynthetic process"/>
    <property type="evidence" value="ECO:0007669"/>
    <property type="project" value="UniProtKB-UniRule"/>
</dbReference>
<dbReference type="CDD" id="cd18079">
    <property type="entry name" value="S-AdoMet_synt"/>
    <property type="match status" value="1"/>
</dbReference>
<dbReference type="FunFam" id="3.30.300.10:FF:000003">
    <property type="entry name" value="S-adenosylmethionine synthase"/>
    <property type="match status" value="1"/>
</dbReference>
<dbReference type="Gene3D" id="3.30.300.10">
    <property type="match status" value="3"/>
</dbReference>
<dbReference type="HAMAP" id="MF_00086">
    <property type="entry name" value="S_AdoMet_synth1"/>
    <property type="match status" value="1"/>
</dbReference>
<dbReference type="InterPro" id="IPR022631">
    <property type="entry name" value="ADOMET_SYNTHASE_CS"/>
</dbReference>
<dbReference type="InterPro" id="IPR022630">
    <property type="entry name" value="S-AdoMet_synt_C"/>
</dbReference>
<dbReference type="InterPro" id="IPR022629">
    <property type="entry name" value="S-AdoMet_synt_central"/>
</dbReference>
<dbReference type="InterPro" id="IPR022628">
    <property type="entry name" value="S-AdoMet_synt_N"/>
</dbReference>
<dbReference type="InterPro" id="IPR002133">
    <property type="entry name" value="S-AdoMet_synthetase"/>
</dbReference>
<dbReference type="InterPro" id="IPR022636">
    <property type="entry name" value="S-AdoMet_synthetase_sfam"/>
</dbReference>
<dbReference type="NCBIfam" id="TIGR01034">
    <property type="entry name" value="metK"/>
    <property type="match status" value="1"/>
</dbReference>
<dbReference type="PANTHER" id="PTHR11964">
    <property type="entry name" value="S-ADENOSYLMETHIONINE SYNTHETASE"/>
    <property type="match status" value="1"/>
</dbReference>
<dbReference type="Pfam" id="PF02773">
    <property type="entry name" value="S-AdoMet_synt_C"/>
    <property type="match status" value="1"/>
</dbReference>
<dbReference type="Pfam" id="PF02772">
    <property type="entry name" value="S-AdoMet_synt_M"/>
    <property type="match status" value="1"/>
</dbReference>
<dbReference type="Pfam" id="PF00438">
    <property type="entry name" value="S-AdoMet_synt_N"/>
    <property type="match status" value="1"/>
</dbReference>
<dbReference type="PIRSF" id="PIRSF000497">
    <property type="entry name" value="MAT"/>
    <property type="match status" value="1"/>
</dbReference>
<dbReference type="SUPFAM" id="SSF55973">
    <property type="entry name" value="S-adenosylmethionine synthetase"/>
    <property type="match status" value="3"/>
</dbReference>
<dbReference type="PROSITE" id="PS00376">
    <property type="entry name" value="ADOMET_SYNTHASE_1"/>
    <property type="match status" value="1"/>
</dbReference>
<dbReference type="PROSITE" id="PS00377">
    <property type="entry name" value="ADOMET_SYNTHASE_2"/>
    <property type="match status" value="1"/>
</dbReference>
<evidence type="ECO:0000255" key="1">
    <source>
        <dbReference type="HAMAP-Rule" id="MF_00086"/>
    </source>
</evidence>
<reference key="1">
    <citation type="journal article" date="2009" name="Genome Biol.">
        <title>Genomic and genetic analyses of diversity and plant interactions of Pseudomonas fluorescens.</title>
        <authorList>
            <person name="Silby M.W."/>
            <person name="Cerdeno-Tarraga A.M."/>
            <person name="Vernikos G.S."/>
            <person name="Giddens S.R."/>
            <person name="Jackson R.W."/>
            <person name="Preston G.M."/>
            <person name="Zhang X.-X."/>
            <person name="Moon C.D."/>
            <person name="Gehrig S.M."/>
            <person name="Godfrey S.A.C."/>
            <person name="Knight C.G."/>
            <person name="Malone J.G."/>
            <person name="Robinson Z."/>
            <person name="Spiers A.J."/>
            <person name="Harris S."/>
            <person name="Challis G.L."/>
            <person name="Yaxley A.M."/>
            <person name="Harris D."/>
            <person name="Seeger K."/>
            <person name="Murphy L."/>
            <person name="Rutter S."/>
            <person name="Squares R."/>
            <person name="Quail M.A."/>
            <person name="Saunders E."/>
            <person name="Mavromatis K."/>
            <person name="Brettin T.S."/>
            <person name="Bentley S.D."/>
            <person name="Hothersall J."/>
            <person name="Stephens E."/>
            <person name="Thomas C.M."/>
            <person name="Parkhill J."/>
            <person name="Levy S.B."/>
            <person name="Rainey P.B."/>
            <person name="Thomson N.R."/>
        </authorList>
    </citation>
    <scope>NUCLEOTIDE SEQUENCE [LARGE SCALE GENOMIC DNA]</scope>
    <source>
        <strain>Pf0-1</strain>
    </source>
</reference>
<organism>
    <name type="scientific">Pseudomonas fluorescens (strain Pf0-1)</name>
    <dbReference type="NCBI Taxonomy" id="205922"/>
    <lineage>
        <taxon>Bacteria</taxon>
        <taxon>Pseudomonadati</taxon>
        <taxon>Pseudomonadota</taxon>
        <taxon>Gammaproteobacteria</taxon>
        <taxon>Pseudomonadales</taxon>
        <taxon>Pseudomonadaceae</taxon>
        <taxon>Pseudomonas</taxon>
    </lineage>
</organism>
<protein>
    <recommendedName>
        <fullName evidence="1">S-adenosylmethionine synthase</fullName>
        <shortName evidence="1">AdoMet synthase</shortName>
        <ecNumber evidence="1">2.5.1.6</ecNumber>
    </recommendedName>
    <alternativeName>
        <fullName evidence="1">MAT</fullName>
    </alternativeName>
    <alternativeName>
        <fullName evidence="1">Methionine adenosyltransferase</fullName>
    </alternativeName>
</protein>
<comment type="function">
    <text evidence="1">Catalyzes the formation of S-adenosylmethionine (AdoMet) from methionine and ATP. The overall synthetic reaction is composed of two sequential steps, AdoMet formation and the subsequent tripolyphosphate hydrolysis which occurs prior to release of AdoMet from the enzyme.</text>
</comment>
<comment type="catalytic activity">
    <reaction evidence="1">
        <text>L-methionine + ATP + H2O = S-adenosyl-L-methionine + phosphate + diphosphate</text>
        <dbReference type="Rhea" id="RHEA:21080"/>
        <dbReference type="ChEBI" id="CHEBI:15377"/>
        <dbReference type="ChEBI" id="CHEBI:30616"/>
        <dbReference type="ChEBI" id="CHEBI:33019"/>
        <dbReference type="ChEBI" id="CHEBI:43474"/>
        <dbReference type="ChEBI" id="CHEBI:57844"/>
        <dbReference type="ChEBI" id="CHEBI:59789"/>
        <dbReference type="EC" id="2.5.1.6"/>
    </reaction>
</comment>
<comment type="cofactor">
    <cofactor evidence="1">
        <name>Mg(2+)</name>
        <dbReference type="ChEBI" id="CHEBI:18420"/>
    </cofactor>
    <text evidence="1">Binds 2 divalent ions per subunit.</text>
</comment>
<comment type="cofactor">
    <cofactor evidence="1">
        <name>K(+)</name>
        <dbReference type="ChEBI" id="CHEBI:29103"/>
    </cofactor>
    <text evidence="1">Binds 1 potassium ion per subunit.</text>
</comment>
<comment type="pathway">
    <text evidence="1">Amino-acid biosynthesis; S-adenosyl-L-methionine biosynthesis; S-adenosyl-L-methionine from L-methionine: step 1/1.</text>
</comment>
<comment type="subunit">
    <text evidence="1">Homotetramer; dimer of dimers.</text>
</comment>
<comment type="subcellular location">
    <subcellularLocation>
        <location evidence="1">Cytoplasm</location>
    </subcellularLocation>
</comment>
<comment type="similarity">
    <text evidence="1">Belongs to the AdoMet synthase family.</text>
</comment>